<feature type="chain" id="PRO_0000355064" description="Thymidylate kinase">
    <location>
        <begin position="1"/>
        <end position="235"/>
    </location>
</feature>
<feature type="binding site" evidence="1">
    <location>
        <begin position="10"/>
        <end position="17"/>
    </location>
    <ligand>
        <name>ATP</name>
        <dbReference type="ChEBI" id="CHEBI:30616"/>
    </ligand>
</feature>
<organism>
    <name type="scientific">African swine fever virus (isolate Pig/Kenya/KEN-50/1950)</name>
    <name type="common">ASFV</name>
    <dbReference type="NCBI Taxonomy" id="561445"/>
    <lineage>
        <taxon>Viruses</taxon>
        <taxon>Varidnaviria</taxon>
        <taxon>Bamfordvirae</taxon>
        <taxon>Nucleocytoviricota</taxon>
        <taxon>Pokkesviricetes</taxon>
        <taxon>Asfuvirales</taxon>
        <taxon>Asfarviridae</taxon>
        <taxon>Asfivirus</taxon>
        <taxon>African swine fever virus</taxon>
    </lineage>
</organism>
<sequence length="235" mass="27544">MRGILIAIEGINGVEKSTQAIRLKNALENKRYDVIYLHFPSPNTDTGKLILDVLNKIVKMPSEQLHELFTKHRCEFTAEIAALLKLNYIVIVDRYIWSGLAYAQADRIMIDTKNTFNPDYTFFLSPNKSLNEKPLHLQRLYETEEKQEIIFTQFINIINEVPKNKFCAIPANLNKEIIDKIIFSKTIKVFEKNLNLDYIKMYDGMYFNVHDLDLIHFDWQKCIEEDDGIDEEYGL</sequence>
<keyword id="KW-0067">ATP-binding</keyword>
<keyword id="KW-0418">Kinase</keyword>
<keyword id="KW-0545">Nucleotide biosynthesis</keyword>
<keyword id="KW-0547">Nucleotide-binding</keyword>
<keyword id="KW-0808">Transferase</keyword>
<reference key="1">
    <citation type="submission" date="2003-03" db="EMBL/GenBank/DDBJ databases">
        <title>African swine fever virus genomes.</title>
        <authorList>
            <person name="Kutish G.F."/>
            <person name="Rock D.L."/>
        </authorList>
    </citation>
    <scope>NUCLEOTIDE SEQUENCE [LARGE SCALE GENOMIC DNA]</scope>
</reference>
<organismHost>
    <name type="scientific">Ornithodoros</name>
    <name type="common">relapsing fever ticks</name>
    <dbReference type="NCBI Taxonomy" id="6937"/>
</organismHost>
<organismHost>
    <name type="scientific">Phacochoerus aethiopicus</name>
    <name type="common">Warthog</name>
    <dbReference type="NCBI Taxonomy" id="85517"/>
</organismHost>
<organismHost>
    <name type="scientific">Phacochoerus africanus</name>
    <name type="common">Warthog</name>
    <dbReference type="NCBI Taxonomy" id="41426"/>
</organismHost>
<organismHost>
    <name type="scientific">Potamochoerus larvatus</name>
    <name type="common">Bushpig</name>
    <dbReference type="NCBI Taxonomy" id="273792"/>
</organismHost>
<organismHost>
    <name type="scientific">Sus scrofa</name>
    <name type="common">Pig</name>
    <dbReference type="NCBI Taxonomy" id="9823"/>
</organismHost>
<proteinExistence type="inferred from homology"/>
<dbReference type="EC" id="2.7.4.9"/>
<dbReference type="EMBL" id="AY261360">
    <property type="status" value="NOT_ANNOTATED_CDS"/>
    <property type="molecule type" value="Genomic_DNA"/>
</dbReference>
<dbReference type="SMR" id="P0C8F9"/>
<dbReference type="UniPathway" id="UPA00575"/>
<dbReference type="Proteomes" id="UP000000861">
    <property type="component" value="Segment"/>
</dbReference>
<dbReference type="GO" id="GO:0005524">
    <property type="term" value="F:ATP binding"/>
    <property type="evidence" value="ECO:0007669"/>
    <property type="project" value="UniProtKB-KW"/>
</dbReference>
<dbReference type="GO" id="GO:0004798">
    <property type="term" value="F:dTMP kinase activity"/>
    <property type="evidence" value="ECO:0007669"/>
    <property type="project" value="UniProtKB-EC"/>
</dbReference>
<dbReference type="GO" id="GO:0006233">
    <property type="term" value="P:dTDP biosynthetic process"/>
    <property type="evidence" value="ECO:0007669"/>
    <property type="project" value="InterPro"/>
</dbReference>
<dbReference type="GO" id="GO:0006235">
    <property type="term" value="P:dTTP biosynthetic process"/>
    <property type="evidence" value="ECO:0007669"/>
    <property type="project" value="UniProtKB-UniPathway"/>
</dbReference>
<dbReference type="GO" id="GO:0006227">
    <property type="term" value="P:dUDP biosynthetic process"/>
    <property type="evidence" value="ECO:0007669"/>
    <property type="project" value="TreeGrafter"/>
</dbReference>
<dbReference type="Gene3D" id="3.40.50.300">
    <property type="entry name" value="P-loop containing nucleotide triphosphate hydrolases"/>
    <property type="match status" value="1"/>
</dbReference>
<dbReference type="InterPro" id="IPR027417">
    <property type="entry name" value="P-loop_NTPase"/>
</dbReference>
<dbReference type="InterPro" id="IPR039430">
    <property type="entry name" value="Thymidylate_kin-like_dom"/>
</dbReference>
<dbReference type="InterPro" id="IPR018095">
    <property type="entry name" value="Thymidylate_kin_CS"/>
</dbReference>
<dbReference type="PANTHER" id="PTHR10344">
    <property type="entry name" value="THYMIDYLATE KINASE"/>
    <property type="match status" value="1"/>
</dbReference>
<dbReference type="PANTHER" id="PTHR10344:SF1">
    <property type="entry name" value="THYMIDYLATE KINASE"/>
    <property type="match status" value="1"/>
</dbReference>
<dbReference type="Pfam" id="PF02223">
    <property type="entry name" value="Thymidylate_kin"/>
    <property type="match status" value="1"/>
</dbReference>
<dbReference type="SUPFAM" id="SSF52540">
    <property type="entry name" value="P-loop containing nucleoside triphosphate hydrolases"/>
    <property type="match status" value="1"/>
</dbReference>
<dbReference type="PROSITE" id="PS01331">
    <property type="entry name" value="THYMIDYLATE_KINASE"/>
    <property type="match status" value="1"/>
</dbReference>
<name>KTHY_ASFK5</name>
<evidence type="ECO:0000255" key="1"/>
<evidence type="ECO:0000305" key="2"/>
<protein>
    <recommendedName>
        <fullName>Thymidylate kinase</fullName>
        <ecNumber>2.7.4.9</ecNumber>
    </recommendedName>
    <alternativeName>
        <fullName>dTMP kinase</fullName>
    </alternativeName>
</protein>
<accession>P0C8F9</accession>
<gene>
    <name type="primary">TMK</name>
    <name type="ordered locus">Ken-048</name>
</gene>
<comment type="function">
    <text>Catalyzes the conversion of dTMP to dTDP.</text>
</comment>
<comment type="catalytic activity">
    <reaction>
        <text>dTMP + ATP = dTDP + ADP</text>
        <dbReference type="Rhea" id="RHEA:13517"/>
        <dbReference type="ChEBI" id="CHEBI:30616"/>
        <dbReference type="ChEBI" id="CHEBI:58369"/>
        <dbReference type="ChEBI" id="CHEBI:63528"/>
        <dbReference type="ChEBI" id="CHEBI:456216"/>
        <dbReference type="EC" id="2.7.4.9"/>
    </reaction>
</comment>
<comment type="pathway">
    <text>Pyrimidine metabolism; dTTP biosynthesis.</text>
</comment>
<comment type="similarity">
    <text evidence="2">Belongs to the thymidylate kinase family.</text>
</comment>